<evidence type="ECO:0000255" key="1">
    <source>
        <dbReference type="HAMAP-Rule" id="MF_00539"/>
    </source>
</evidence>
<evidence type="ECO:0000256" key="2">
    <source>
        <dbReference type="SAM" id="MobiDB-lite"/>
    </source>
</evidence>
<evidence type="ECO:0000305" key="3"/>
<comment type="similarity">
    <text evidence="1">Belongs to the bacterial ribosomal protein bL27 family.</text>
</comment>
<accession>A0LPF8</accession>
<name>RL27_SYNFM</name>
<feature type="chain" id="PRO_1000017629" description="Large ribosomal subunit protein bL27">
    <location>
        <begin position="1"/>
        <end position="88"/>
    </location>
</feature>
<feature type="region of interest" description="Disordered" evidence="2">
    <location>
        <begin position="1"/>
        <end position="24"/>
    </location>
</feature>
<keyword id="KW-1185">Reference proteome</keyword>
<keyword id="KW-0687">Ribonucleoprotein</keyword>
<keyword id="KW-0689">Ribosomal protein</keyword>
<reference key="1">
    <citation type="submission" date="2006-10" db="EMBL/GenBank/DDBJ databases">
        <title>Complete sequence of Syntrophobacter fumaroxidans MPOB.</title>
        <authorList>
            <consortium name="US DOE Joint Genome Institute"/>
            <person name="Copeland A."/>
            <person name="Lucas S."/>
            <person name="Lapidus A."/>
            <person name="Barry K."/>
            <person name="Detter J.C."/>
            <person name="Glavina del Rio T."/>
            <person name="Hammon N."/>
            <person name="Israni S."/>
            <person name="Pitluck S."/>
            <person name="Goltsman E.G."/>
            <person name="Martinez M."/>
            <person name="Schmutz J."/>
            <person name="Larimer F."/>
            <person name="Land M."/>
            <person name="Hauser L."/>
            <person name="Kyrpides N."/>
            <person name="Kim E."/>
            <person name="Boone D.R."/>
            <person name="Brockman F."/>
            <person name="Culley D."/>
            <person name="Ferry J."/>
            <person name="Gunsalus R."/>
            <person name="McInerney M.J."/>
            <person name="Morrison M."/>
            <person name="Plugge C."/>
            <person name="Rohlin L."/>
            <person name="Scholten J."/>
            <person name="Sieber J."/>
            <person name="Stams A.J.M."/>
            <person name="Worm P."/>
            <person name="Henstra A.M."/>
            <person name="Richardson P."/>
        </authorList>
    </citation>
    <scope>NUCLEOTIDE SEQUENCE [LARGE SCALE GENOMIC DNA]</scope>
    <source>
        <strain>DSM 10017 / MPOB</strain>
    </source>
</reference>
<proteinExistence type="inferred from homology"/>
<protein>
    <recommendedName>
        <fullName evidence="1">Large ribosomal subunit protein bL27</fullName>
    </recommendedName>
    <alternativeName>
        <fullName evidence="3">50S ribosomal protein L27</fullName>
    </alternativeName>
</protein>
<sequence>MAHKKAGGSSRNGRDSAGQRRGVKRYGGEFVRAGNILVRQLGTKFHPGKNVGLGRDYTLFAMIDGIVAFEYKDKTRQQISVYPIPAQE</sequence>
<gene>
    <name evidence="1" type="primary">rpmA</name>
    <name type="ordered locus">Sfum_3640</name>
</gene>
<dbReference type="EMBL" id="CP000478">
    <property type="protein sequence ID" value="ABK19310.1"/>
    <property type="molecule type" value="Genomic_DNA"/>
</dbReference>
<dbReference type="RefSeq" id="WP_011700435.1">
    <property type="nucleotide sequence ID" value="NC_008554.1"/>
</dbReference>
<dbReference type="SMR" id="A0LPF8"/>
<dbReference type="FunCoup" id="A0LPF8">
    <property type="interactions" value="578"/>
</dbReference>
<dbReference type="STRING" id="335543.Sfum_3640"/>
<dbReference type="KEGG" id="sfu:Sfum_3640"/>
<dbReference type="eggNOG" id="COG0211">
    <property type="taxonomic scope" value="Bacteria"/>
</dbReference>
<dbReference type="HOGENOM" id="CLU_095424_4_0_7"/>
<dbReference type="InParanoid" id="A0LPF8"/>
<dbReference type="OrthoDB" id="9803474at2"/>
<dbReference type="Proteomes" id="UP000001784">
    <property type="component" value="Chromosome"/>
</dbReference>
<dbReference type="GO" id="GO:0022625">
    <property type="term" value="C:cytosolic large ribosomal subunit"/>
    <property type="evidence" value="ECO:0007669"/>
    <property type="project" value="TreeGrafter"/>
</dbReference>
<dbReference type="GO" id="GO:0003735">
    <property type="term" value="F:structural constituent of ribosome"/>
    <property type="evidence" value="ECO:0007669"/>
    <property type="project" value="InterPro"/>
</dbReference>
<dbReference type="GO" id="GO:0006412">
    <property type="term" value="P:translation"/>
    <property type="evidence" value="ECO:0007669"/>
    <property type="project" value="UniProtKB-UniRule"/>
</dbReference>
<dbReference type="FunFam" id="2.40.50.100:FF:000004">
    <property type="entry name" value="50S ribosomal protein L27"/>
    <property type="match status" value="1"/>
</dbReference>
<dbReference type="Gene3D" id="2.40.50.100">
    <property type="match status" value="1"/>
</dbReference>
<dbReference type="HAMAP" id="MF_00539">
    <property type="entry name" value="Ribosomal_bL27"/>
    <property type="match status" value="1"/>
</dbReference>
<dbReference type="InterPro" id="IPR001684">
    <property type="entry name" value="Ribosomal_bL27"/>
</dbReference>
<dbReference type="NCBIfam" id="TIGR00062">
    <property type="entry name" value="L27"/>
    <property type="match status" value="1"/>
</dbReference>
<dbReference type="PANTHER" id="PTHR15893:SF0">
    <property type="entry name" value="LARGE RIBOSOMAL SUBUNIT PROTEIN BL27M"/>
    <property type="match status" value="1"/>
</dbReference>
<dbReference type="PANTHER" id="PTHR15893">
    <property type="entry name" value="RIBOSOMAL PROTEIN L27"/>
    <property type="match status" value="1"/>
</dbReference>
<dbReference type="Pfam" id="PF01016">
    <property type="entry name" value="Ribosomal_L27"/>
    <property type="match status" value="1"/>
</dbReference>
<dbReference type="PRINTS" id="PR00063">
    <property type="entry name" value="RIBOSOMALL27"/>
</dbReference>
<dbReference type="SUPFAM" id="SSF110324">
    <property type="entry name" value="Ribosomal L27 protein-like"/>
    <property type="match status" value="1"/>
</dbReference>
<organism>
    <name type="scientific">Syntrophobacter fumaroxidans (strain DSM 10017 / MPOB)</name>
    <dbReference type="NCBI Taxonomy" id="335543"/>
    <lineage>
        <taxon>Bacteria</taxon>
        <taxon>Pseudomonadati</taxon>
        <taxon>Thermodesulfobacteriota</taxon>
        <taxon>Syntrophobacteria</taxon>
        <taxon>Syntrophobacterales</taxon>
        <taxon>Syntrophobacteraceae</taxon>
        <taxon>Syntrophobacter</taxon>
    </lineage>
</organism>